<reference key="1">
    <citation type="journal article" date="2003" name="Yi Chuan Xue Bao">
        <title>Molecular cloning for testis spermatogenesis cell apoptosis related gene TSARG1 and Mtsarg1 and expression analysis for Mtsarg1 gene.</title>
        <authorList>
            <person name="Fu J.J."/>
            <person name="Lu G.X."/>
            <person name="Li L.Y."/>
            <person name="Liu G."/>
            <person name="Xing X.W."/>
            <person name="Liu S.F."/>
        </authorList>
    </citation>
    <scope>NUCLEOTIDE SEQUENCE [MRNA] (ISOFORM 2)</scope>
    <scope>TISSUE SPECIFICITY</scope>
    <source>
        <strain>C57BL/6J</strain>
        <tissue>Testis</tissue>
    </source>
</reference>
<reference key="2">
    <citation type="journal article" date="2005" name="Science">
        <title>The transcriptional landscape of the mammalian genome.</title>
        <authorList>
            <person name="Carninci P."/>
            <person name="Kasukawa T."/>
            <person name="Katayama S."/>
            <person name="Gough J."/>
            <person name="Frith M.C."/>
            <person name="Maeda N."/>
            <person name="Oyama R."/>
            <person name="Ravasi T."/>
            <person name="Lenhard B."/>
            <person name="Wells C."/>
            <person name="Kodzius R."/>
            <person name="Shimokawa K."/>
            <person name="Bajic V.B."/>
            <person name="Brenner S.E."/>
            <person name="Batalov S."/>
            <person name="Forrest A.R."/>
            <person name="Zavolan M."/>
            <person name="Davis M.J."/>
            <person name="Wilming L.G."/>
            <person name="Aidinis V."/>
            <person name="Allen J.E."/>
            <person name="Ambesi-Impiombato A."/>
            <person name="Apweiler R."/>
            <person name="Aturaliya R.N."/>
            <person name="Bailey T.L."/>
            <person name="Bansal M."/>
            <person name="Baxter L."/>
            <person name="Beisel K.W."/>
            <person name="Bersano T."/>
            <person name="Bono H."/>
            <person name="Chalk A.M."/>
            <person name="Chiu K.P."/>
            <person name="Choudhary V."/>
            <person name="Christoffels A."/>
            <person name="Clutterbuck D.R."/>
            <person name="Crowe M.L."/>
            <person name="Dalla E."/>
            <person name="Dalrymple B.P."/>
            <person name="de Bono B."/>
            <person name="Della Gatta G."/>
            <person name="di Bernardo D."/>
            <person name="Down T."/>
            <person name="Engstrom P."/>
            <person name="Fagiolini M."/>
            <person name="Faulkner G."/>
            <person name="Fletcher C.F."/>
            <person name="Fukushima T."/>
            <person name="Furuno M."/>
            <person name="Futaki S."/>
            <person name="Gariboldi M."/>
            <person name="Georgii-Hemming P."/>
            <person name="Gingeras T.R."/>
            <person name="Gojobori T."/>
            <person name="Green R.E."/>
            <person name="Gustincich S."/>
            <person name="Harbers M."/>
            <person name="Hayashi Y."/>
            <person name="Hensch T.K."/>
            <person name="Hirokawa N."/>
            <person name="Hill D."/>
            <person name="Huminiecki L."/>
            <person name="Iacono M."/>
            <person name="Ikeo K."/>
            <person name="Iwama A."/>
            <person name="Ishikawa T."/>
            <person name="Jakt M."/>
            <person name="Kanapin A."/>
            <person name="Katoh M."/>
            <person name="Kawasawa Y."/>
            <person name="Kelso J."/>
            <person name="Kitamura H."/>
            <person name="Kitano H."/>
            <person name="Kollias G."/>
            <person name="Krishnan S.P."/>
            <person name="Kruger A."/>
            <person name="Kummerfeld S.K."/>
            <person name="Kurochkin I.V."/>
            <person name="Lareau L.F."/>
            <person name="Lazarevic D."/>
            <person name="Lipovich L."/>
            <person name="Liu J."/>
            <person name="Liuni S."/>
            <person name="McWilliam S."/>
            <person name="Madan Babu M."/>
            <person name="Madera M."/>
            <person name="Marchionni L."/>
            <person name="Matsuda H."/>
            <person name="Matsuzawa S."/>
            <person name="Miki H."/>
            <person name="Mignone F."/>
            <person name="Miyake S."/>
            <person name="Morris K."/>
            <person name="Mottagui-Tabar S."/>
            <person name="Mulder N."/>
            <person name="Nakano N."/>
            <person name="Nakauchi H."/>
            <person name="Ng P."/>
            <person name="Nilsson R."/>
            <person name="Nishiguchi S."/>
            <person name="Nishikawa S."/>
            <person name="Nori F."/>
            <person name="Ohara O."/>
            <person name="Okazaki Y."/>
            <person name="Orlando V."/>
            <person name="Pang K.C."/>
            <person name="Pavan W.J."/>
            <person name="Pavesi G."/>
            <person name="Pesole G."/>
            <person name="Petrovsky N."/>
            <person name="Piazza S."/>
            <person name="Reed J."/>
            <person name="Reid J.F."/>
            <person name="Ring B.Z."/>
            <person name="Ringwald M."/>
            <person name="Rost B."/>
            <person name="Ruan Y."/>
            <person name="Salzberg S.L."/>
            <person name="Sandelin A."/>
            <person name="Schneider C."/>
            <person name="Schoenbach C."/>
            <person name="Sekiguchi K."/>
            <person name="Semple C.A."/>
            <person name="Seno S."/>
            <person name="Sessa L."/>
            <person name="Sheng Y."/>
            <person name="Shibata Y."/>
            <person name="Shimada H."/>
            <person name="Shimada K."/>
            <person name="Silva D."/>
            <person name="Sinclair B."/>
            <person name="Sperling S."/>
            <person name="Stupka E."/>
            <person name="Sugiura K."/>
            <person name="Sultana R."/>
            <person name="Takenaka Y."/>
            <person name="Taki K."/>
            <person name="Tammoja K."/>
            <person name="Tan S.L."/>
            <person name="Tang S."/>
            <person name="Taylor M.S."/>
            <person name="Tegner J."/>
            <person name="Teichmann S.A."/>
            <person name="Ueda H.R."/>
            <person name="van Nimwegen E."/>
            <person name="Verardo R."/>
            <person name="Wei C.L."/>
            <person name="Yagi K."/>
            <person name="Yamanishi H."/>
            <person name="Zabarovsky E."/>
            <person name="Zhu S."/>
            <person name="Zimmer A."/>
            <person name="Hide W."/>
            <person name="Bult C."/>
            <person name="Grimmond S.M."/>
            <person name="Teasdale R.D."/>
            <person name="Liu E.T."/>
            <person name="Brusic V."/>
            <person name="Quackenbush J."/>
            <person name="Wahlestedt C."/>
            <person name="Mattick J.S."/>
            <person name="Hume D.A."/>
            <person name="Kai C."/>
            <person name="Sasaki D."/>
            <person name="Tomaru Y."/>
            <person name="Fukuda S."/>
            <person name="Kanamori-Katayama M."/>
            <person name="Suzuki M."/>
            <person name="Aoki J."/>
            <person name="Arakawa T."/>
            <person name="Iida J."/>
            <person name="Imamura K."/>
            <person name="Itoh M."/>
            <person name="Kato T."/>
            <person name="Kawaji H."/>
            <person name="Kawagashira N."/>
            <person name="Kawashima T."/>
            <person name="Kojima M."/>
            <person name="Kondo S."/>
            <person name="Konno H."/>
            <person name="Nakano K."/>
            <person name="Ninomiya N."/>
            <person name="Nishio T."/>
            <person name="Okada M."/>
            <person name="Plessy C."/>
            <person name="Shibata K."/>
            <person name="Shiraki T."/>
            <person name="Suzuki S."/>
            <person name="Tagami M."/>
            <person name="Waki K."/>
            <person name="Watahiki A."/>
            <person name="Okamura-Oho Y."/>
            <person name="Suzuki H."/>
            <person name="Kawai J."/>
            <person name="Hayashizaki Y."/>
        </authorList>
    </citation>
    <scope>NUCLEOTIDE SEQUENCE [LARGE SCALE MRNA] (ISOFORMS 1; 2 AND 3)</scope>
    <source>
        <strain>C57BL/6J</strain>
        <tissue>Testis</tissue>
    </source>
</reference>
<reference key="3">
    <citation type="journal article" date="2004" name="Genome Res.">
        <title>The status, quality, and expansion of the NIH full-length cDNA project: the Mammalian Gene Collection (MGC).</title>
        <authorList>
            <consortium name="The MGC Project Team"/>
        </authorList>
    </citation>
    <scope>NUCLEOTIDE SEQUENCE [LARGE SCALE MRNA] (ISOFORM 4)</scope>
    <source>
        <tissue>Testis</tissue>
    </source>
</reference>
<comment type="subcellular location">
    <subcellularLocation>
        <location evidence="1">Cell projection</location>
        <location evidence="1">Cilium</location>
        <location evidence="1">Flagellum</location>
    </subcellularLocation>
</comment>
<comment type="alternative products">
    <event type="alternative splicing"/>
    <isoform>
        <id>Q9D9T6-1</id>
        <name>1</name>
        <sequence type="displayed"/>
    </isoform>
    <isoform>
        <id>Q9D9T6-2</id>
        <name>2</name>
        <sequence type="described" ref="VSP_008525"/>
    </isoform>
    <isoform>
        <id>Q9D9T6-3</id>
        <name>3</name>
        <sequence type="described" ref="VSP_008525 VSP_008526 VSP_008527"/>
    </isoform>
    <isoform>
        <id>Q9D9T6-4</id>
        <name>4</name>
        <sequence type="described" ref="VSP_008523 VSP_008524"/>
    </isoform>
</comment>
<comment type="tissue specificity">
    <text evidence="3">Strongly expressed in testis. Faintly expressed in epididymis, ovary, spleen, kidney, lung, heart, brain, epididymis, liver and skeletal muscle.</text>
</comment>
<comment type="miscellaneous">
    <molecule>Isoform 2</molecule>
    <text evidence="7">May be due to competing acceptor splice site.</text>
</comment>
<comment type="miscellaneous">
    <molecule>Isoform 3</molecule>
    <text evidence="7">May be due to competing acceptor splice site and by intron retention.</text>
</comment>
<comment type="miscellaneous">
    <molecule>Isoform 4</molecule>
    <text evidence="7">May be due to competing donor splice site.</text>
</comment>
<sequence length="193" mass="20947">MKKVKKKKSDSRRRRNSISPQTSSDSSQQPSSETPPSCPEPASPPSKPQPCQESTTPHQVNPEPKPQQHTPQPLPPPEKPASSPFLVPMEPKPILPSRKAAVPLTYVAPRSCSCAACPGSSACWHRLGLCHSRIFDVLLPRDWSSMPGRGVPNLLTFYRKPSRKYCAPRNSRASSSRNCCCGSGGLGSCLLHG</sequence>
<gene>
    <name type="primary">Spata3</name>
    <name type="synonym">Tsarg1</name>
</gene>
<organism>
    <name type="scientific">Mus musculus</name>
    <name type="common">Mouse</name>
    <dbReference type="NCBI Taxonomy" id="10090"/>
    <lineage>
        <taxon>Eukaryota</taxon>
        <taxon>Metazoa</taxon>
        <taxon>Chordata</taxon>
        <taxon>Craniata</taxon>
        <taxon>Vertebrata</taxon>
        <taxon>Euteleostomi</taxon>
        <taxon>Mammalia</taxon>
        <taxon>Eutheria</taxon>
        <taxon>Euarchontoglires</taxon>
        <taxon>Glires</taxon>
        <taxon>Rodentia</taxon>
        <taxon>Myomorpha</taxon>
        <taxon>Muroidea</taxon>
        <taxon>Muridae</taxon>
        <taxon>Murinae</taxon>
        <taxon>Mus</taxon>
        <taxon>Mus</taxon>
    </lineage>
</organism>
<dbReference type="EMBL" id="AF399971">
    <property type="protein sequence ID" value="AAM90619.1"/>
    <property type="molecule type" value="mRNA"/>
</dbReference>
<dbReference type="EMBL" id="AK005880">
    <property type="protein sequence ID" value="BAB24295.1"/>
    <property type="molecule type" value="mRNA"/>
</dbReference>
<dbReference type="EMBL" id="AK006491">
    <property type="protein sequence ID" value="BAB24616.1"/>
    <property type="molecule type" value="mRNA"/>
</dbReference>
<dbReference type="EMBL" id="AK015193">
    <property type="protein sequence ID" value="BAB29741.1"/>
    <property type="molecule type" value="mRNA"/>
</dbReference>
<dbReference type="EMBL" id="BC048516">
    <property type="protein sequence ID" value="AAH48516.1"/>
    <property type="molecule type" value="mRNA"/>
</dbReference>
<dbReference type="CCDS" id="CCDS15116.1">
    <molecule id="Q9D9T6-2"/>
</dbReference>
<dbReference type="CCDS" id="CCDS35643.1">
    <molecule id="Q9D9T6-1"/>
</dbReference>
<dbReference type="CCDS" id="CCDS48301.1">
    <molecule id="Q9D9T6-3"/>
</dbReference>
<dbReference type="RefSeq" id="NP_001116204.1">
    <molecule id="Q9D9T6-2"/>
    <property type="nucleotide sequence ID" value="NM_001122732.2"/>
</dbReference>
<dbReference type="RefSeq" id="NP_001366294.1">
    <molecule id="Q9D9T6-1"/>
    <property type="nucleotide sequence ID" value="NM_001379365.1"/>
</dbReference>
<dbReference type="RefSeq" id="NP_081305.1">
    <molecule id="Q9D9T6-3"/>
    <property type="nucleotide sequence ID" value="NM_027029.3"/>
</dbReference>
<dbReference type="RefSeq" id="NP_081576.2">
    <molecule id="Q9D9T6-1"/>
    <property type="nucleotide sequence ID" value="NM_027300.4"/>
</dbReference>
<dbReference type="RefSeq" id="NP_082923.1">
    <molecule id="Q9D9T6-2"/>
    <property type="nucleotide sequence ID" value="NM_028647.5"/>
</dbReference>
<dbReference type="BioGRID" id="213843">
    <property type="interactions" value="1"/>
</dbReference>
<dbReference type="FunCoup" id="Q9D9T6">
    <property type="interactions" value="3"/>
</dbReference>
<dbReference type="STRING" id="10090.ENSMUSP00000050509"/>
<dbReference type="iPTMnet" id="Q9D9T6"/>
<dbReference type="PhosphoSitePlus" id="Q9D9T6"/>
<dbReference type="PaxDb" id="10090-ENSMUSP00000050509"/>
<dbReference type="ProteomicsDB" id="261637">
    <molecule id="Q9D9T6-1"/>
</dbReference>
<dbReference type="ProteomicsDB" id="261638">
    <molecule id="Q9D9T6-2"/>
</dbReference>
<dbReference type="ProteomicsDB" id="261639">
    <molecule id="Q9D9T6-3"/>
</dbReference>
<dbReference type="Antibodypedia" id="11837">
    <property type="antibodies" value="41 antibodies from 20 providers"/>
</dbReference>
<dbReference type="Ensembl" id="ENSMUST00000052854.13">
    <molecule id="Q9D9T6-1"/>
    <property type="protein sequence ID" value="ENSMUSP00000050509.7"/>
    <property type="gene ID" value="ENSMUSG00000026226.17"/>
</dbReference>
<dbReference type="Ensembl" id="ENSMUST00000113344.8">
    <molecule id="Q9D9T6-2"/>
    <property type="protein sequence ID" value="ENSMUSP00000108971.2"/>
    <property type="gene ID" value="ENSMUSG00000026226.17"/>
</dbReference>
<dbReference type="Ensembl" id="ENSMUST00000125083.2">
    <molecule id="Q9D9T6-4"/>
    <property type="protein sequence ID" value="ENSMUSP00000120768.2"/>
    <property type="gene ID" value="ENSMUSG00000026226.17"/>
</dbReference>
<dbReference type="Ensembl" id="ENSMUST00000130504.8">
    <molecule id="Q9D9T6-2"/>
    <property type="protein sequence ID" value="ENSMUSP00000116903.2"/>
    <property type="gene ID" value="ENSMUSG00000026226.17"/>
</dbReference>
<dbReference type="Ensembl" id="ENSMUST00000152501.8">
    <molecule id="Q9D9T6-3"/>
    <property type="protein sequence ID" value="ENSMUSP00000123194.2"/>
    <property type="gene ID" value="ENSMUSG00000026226.17"/>
</dbReference>
<dbReference type="Ensembl" id="ENSMUST00000159876.8">
    <molecule id="Q9D9T6-1"/>
    <property type="protein sequence ID" value="ENSMUSP00000124671.2"/>
    <property type="gene ID" value="ENSMUSG00000026226.17"/>
</dbReference>
<dbReference type="GeneID" id="70060"/>
<dbReference type="KEGG" id="mmu:70060"/>
<dbReference type="UCSC" id="uc007bur.2">
    <molecule id="Q9D9T6-3"/>
    <property type="organism name" value="mouse"/>
</dbReference>
<dbReference type="UCSC" id="uc007buv.2">
    <molecule id="Q9D9T6-1"/>
    <property type="organism name" value="mouse"/>
</dbReference>
<dbReference type="AGR" id="MGI:1917310"/>
<dbReference type="CTD" id="130560"/>
<dbReference type="MGI" id="MGI:1917310">
    <property type="gene designation" value="Spata3"/>
</dbReference>
<dbReference type="VEuPathDB" id="HostDB:ENSMUSG00000026226"/>
<dbReference type="eggNOG" id="ENOG502TDUQ">
    <property type="taxonomic scope" value="Eukaryota"/>
</dbReference>
<dbReference type="GeneTree" id="ENSGT00390000003032"/>
<dbReference type="HOGENOM" id="CLU_099077_0_0_1"/>
<dbReference type="InParanoid" id="Q9D9T6"/>
<dbReference type="OMA" id="CSYATCP"/>
<dbReference type="TreeFam" id="TF338040"/>
<dbReference type="BioGRID-ORCS" id="70060">
    <property type="hits" value="4 hits in 77 CRISPR screens"/>
</dbReference>
<dbReference type="PRO" id="PR:Q9D9T6"/>
<dbReference type="Proteomes" id="UP000000589">
    <property type="component" value="Chromosome 1"/>
</dbReference>
<dbReference type="RNAct" id="Q9D9T6">
    <property type="molecule type" value="protein"/>
</dbReference>
<dbReference type="Bgee" id="ENSMUSG00000026226">
    <property type="expression patterns" value="Expressed in seminiferous tubule of testis and 36 other cell types or tissues"/>
</dbReference>
<dbReference type="ExpressionAtlas" id="Q9D9T6">
    <property type="expression patterns" value="baseline and differential"/>
</dbReference>
<dbReference type="GO" id="GO:0036126">
    <property type="term" value="C:sperm flagellum"/>
    <property type="evidence" value="ECO:0000250"/>
    <property type="project" value="UniProtKB"/>
</dbReference>
<dbReference type="InterPro" id="IPR026717">
    <property type="entry name" value="SPATA3"/>
</dbReference>
<dbReference type="PANTHER" id="PTHR22234:SF0">
    <property type="entry name" value="SPERMATOGENESIS-ASSOCIATED PROTEIN 3"/>
    <property type="match status" value="1"/>
</dbReference>
<dbReference type="PANTHER" id="PTHR22234">
    <property type="entry name" value="TESTIS SPERMATOCYTE APOPTOSIS-RELATED GENE 1 PROTEIN"/>
    <property type="match status" value="1"/>
</dbReference>
<dbReference type="Pfam" id="PF15662">
    <property type="entry name" value="SPATA3"/>
    <property type="match status" value="1"/>
</dbReference>
<keyword id="KW-0025">Alternative splicing</keyword>
<keyword id="KW-0966">Cell projection</keyword>
<keyword id="KW-0969">Cilium</keyword>
<keyword id="KW-0282">Flagellum</keyword>
<keyword id="KW-1185">Reference proteome</keyword>
<evidence type="ECO:0000250" key="1">
    <source>
        <dbReference type="UniProtKB" id="Q8NHX4"/>
    </source>
</evidence>
<evidence type="ECO:0000256" key="2">
    <source>
        <dbReference type="SAM" id="MobiDB-lite"/>
    </source>
</evidence>
<evidence type="ECO:0000269" key="3">
    <source>
    </source>
</evidence>
<evidence type="ECO:0000303" key="4">
    <source>
    </source>
</evidence>
<evidence type="ECO:0000303" key="5">
    <source>
    </source>
</evidence>
<evidence type="ECO:0000303" key="6">
    <source>
    </source>
</evidence>
<evidence type="ECO:0000305" key="7"/>
<proteinExistence type="evidence at transcript level"/>
<accession>Q9D9T6</accession>
<accession>Q80ZS4</accession>
<accession>Q9D5L5</accession>
<accession>Q9DAF5</accession>
<feature type="chain" id="PRO_0000072175" description="Spermatogenesis-associated protein 3">
    <location>
        <begin position="1"/>
        <end position="193"/>
    </location>
</feature>
<feature type="region of interest" description="Disordered" evidence="2">
    <location>
        <begin position="1"/>
        <end position="92"/>
    </location>
</feature>
<feature type="compositionally biased region" description="Basic residues" evidence="2">
    <location>
        <begin position="1"/>
        <end position="16"/>
    </location>
</feature>
<feature type="compositionally biased region" description="Low complexity" evidence="2">
    <location>
        <begin position="17"/>
        <end position="35"/>
    </location>
</feature>
<feature type="compositionally biased region" description="Pro residues" evidence="2">
    <location>
        <begin position="36"/>
        <end position="48"/>
    </location>
</feature>
<feature type="splice variant" id="VSP_008523" description="In isoform 4." evidence="5">
    <original>VPM</original>
    <variation>QCL</variation>
    <location>
        <begin position="87"/>
        <end position="89"/>
    </location>
</feature>
<feature type="splice variant" id="VSP_008524" description="In isoform 4." evidence="5">
    <location>
        <begin position="90"/>
        <end position="193"/>
    </location>
</feature>
<feature type="splice variant" id="VSP_008525" description="In isoform 2 and isoform 3." evidence="4 6">
    <location>
        <position position="101"/>
    </location>
</feature>
<feature type="splice variant" id="VSP_008526" description="In isoform 3." evidence="6">
    <original>KPSRKYCAPRNS</original>
    <variation>FRMNGRAKKPWV</variation>
    <location>
        <begin position="160"/>
        <end position="171"/>
    </location>
</feature>
<feature type="splice variant" id="VSP_008527" description="In isoform 3." evidence="6">
    <location>
        <begin position="172"/>
        <end position="193"/>
    </location>
</feature>
<feature type="sequence conflict" description="In Ref. 2; BAB24616." evidence="7" ref="2">
    <original>N</original>
    <variation>D</variation>
    <location>
        <position position="16"/>
    </location>
</feature>
<name>SPTA3_MOUSE</name>
<protein>
    <recommendedName>
        <fullName>Spermatogenesis-associated protein 3</fullName>
    </recommendedName>
    <alternativeName>
        <fullName>Testis and spermatogenesis cell-related protein 1</fullName>
        <shortName>mTSARG1</shortName>
    </alternativeName>
    <alternativeName>
        <fullName>Testis spermatocyte apoptosis-related protein 1</fullName>
    </alternativeName>
</protein>